<reference key="1">
    <citation type="journal article" date="2001" name="Microb. Drug Resist.">
        <title>Annotated draft genomic sequence from a Streptococcus pneumoniae type 19F clinical isolate.</title>
        <authorList>
            <person name="Dopazo J."/>
            <person name="Mendoza A."/>
            <person name="Herrero J."/>
            <person name="Caldara F."/>
            <person name="Humbert Y."/>
            <person name="Friedli L."/>
            <person name="Guerrier M."/>
            <person name="Grand-Schenk E."/>
            <person name="Gandin C."/>
            <person name="de Francesco M."/>
            <person name="Polissi A."/>
            <person name="Buell G."/>
            <person name="Feger G."/>
            <person name="Garcia E."/>
            <person name="Peitsch M."/>
            <person name="Garcia-Bustos J.F."/>
        </authorList>
    </citation>
    <scope>NUCLEOTIDE SEQUENCE [LARGE SCALE GENOMIC DNA]</scope>
    <source>
        <strain>G54</strain>
    </source>
</reference>
<reference key="2">
    <citation type="submission" date="2008-03" db="EMBL/GenBank/DDBJ databases">
        <title>Pneumococcal beta glucoside metabolism investigated by whole genome comparison.</title>
        <authorList>
            <person name="Mulas L."/>
            <person name="Trappetti C."/>
            <person name="Hakenbeck R."/>
            <person name="Iannelli F."/>
            <person name="Pozzi G."/>
            <person name="Davidsen T.M."/>
            <person name="Tettelin H."/>
            <person name="Oggioni M."/>
        </authorList>
    </citation>
    <scope>NUCLEOTIDE SEQUENCE [LARGE SCALE GENOMIC DNA]</scope>
    <source>
        <strain>G54</strain>
    </source>
</reference>
<keyword id="KW-0963">Cytoplasm</keyword>
<keyword id="KW-0378">Hydrolase</keyword>
<keyword id="KW-0540">Nuclease</keyword>
<keyword id="KW-0690">Ribosome biogenesis</keyword>
<gene>
    <name type="ordered locus">SPG_0181</name>
</gene>
<accession>B5E6E1</accession>
<organism>
    <name type="scientific">Streptococcus pneumoniae serotype 19F (strain G54)</name>
    <dbReference type="NCBI Taxonomy" id="512566"/>
    <lineage>
        <taxon>Bacteria</taxon>
        <taxon>Bacillati</taxon>
        <taxon>Bacillota</taxon>
        <taxon>Bacilli</taxon>
        <taxon>Lactobacillales</taxon>
        <taxon>Streptococcaceae</taxon>
        <taxon>Streptococcus</taxon>
    </lineage>
</organism>
<protein>
    <recommendedName>
        <fullName evidence="1">Putative pre-16S rRNA nuclease</fullName>
        <ecNumber evidence="1">3.1.-.-</ecNumber>
    </recommendedName>
</protein>
<evidence type="ECO:0000255" key="1">
    <source>
        <dbReference type="HAMAP-Rule" id="MF_00651"/>
    </source>
</evidence>
<sequence length="139" mass="15653">MRIMGLDVGSKTVGVAISDPLGFTAQGXEIIQINEEQGQFGFDRVKELVDTYKVERFVVGLPKNMNNTSGPRVEASQAYGAKLEEFFGLPVDYQDERLTTVAAERMLIEQADISRNKRKKVIDKLAAQLILQNYLDRKF</sequence>
<dbReference type="EC" id="3.1.-.-" evidence="1"/>
<dbReference type="EMBL" id="CP001015">
    <property type="protein sequence ID" value="ACF56457.1"/>
    <property type="molecule type" value="Genomic_DNA"/>
</dbReference>
<dbReference type="KEGG" id="spx:SPG_0181"/>
<dbReference type="HOGENOM" id="CLU_098240_2_0_9"/>
<dbReference type="GO" id="GO:0005829">
    <property type="term" value="C:cytosol"/>
    <property type="evidence" value="ECO:0007669"/>
    <property type="project" value="TreeGrafter"/>
</dbReference>
<dbReference type="GO" id="GO:0004518">
    <property type="term" value="F:nuclease activity"/>
    <property type="evidence" value="ECO:0007669"/>
    <property type="project" value="UniProtKB-KW"/>
</dbReference>
<dbReference type="GO" id="GO:0000967">
    <property type="term" value="P:rRNA 5'-end processing"/>
    <property type="evidence" value="ECO:0007669"/>
    <property type="project" value="UniProtKB-UniRule"/>
</dbReference>
<dbReference type="CDD" id="cd16964">
    <property type="entry name" value="YqgF"/>
    <property type="match status" value="1"/>
</dbReference>
<dbReference type="FunFam" id="3.30.420.140:FF:000003">
    <property type="entry name" value="Putative pre-16S rRNA nuclease"/>
    <property type="match status" value="1"/>
</dbReference>
<dbReference type="Gene3D" id="3.30.420.140">
    <property type="entry name" value="YqgF/RNase H-like domain"/>
    <property type="match status" value="1"/>
</dbReference>
<dbReference type="HAMAP" id="MF_00651">
    <property type="entry name" value="Nuclease_YqgF"/>
    <property type="match status" value="1"/>
</dbReference>
<dbReference type="InterPro" id="IPR012337">
    <property type="entry name" value="RNaseH-like_sf"/>
</dbReference>
<dbReference type="InterPro" id="IPR005227">
    <property type="entry name" value="YqgF"/>
</dbReference>
<dbReference type="InterPro" id="IPR006641">
    <property type="entry name" value="YqgF/RNaseH-like_dom"/>
</dbReference>
<dbReference type="InterPro" id="IPR037027">
    <property type="entry name" value="YqgF/RNaseH-like_dom_sf"/>
</dbReference>
<dbReference type="NCBIfam" id="TIGR00250">
    <property type="entry name" value="RNAse_H_YqgF"/>
    <property type="match status" value="1"/>
</dbReference>
<dbReference type="PANTHER" id="PTHR33317">
    <property type="entry name" value="POLYNUCLEOTIDYL TRANSFERASE, RIBONUCLEASE H-LIKE SUPERFAMILY PROTEIN"/>
    <property type="match status" value="1"/>
</dbReference>
<dbReference type="PANTHER" id="PTHR33317:SF4">
    <property type="entry name" value="POLYNUCLEOTIDYL TRANSFERASE, RIBONUCLEASE H-LIKE SUPERFAMILY PROTEIN"/>
    <property type="match status" value="1"/>
</dbReference>
<dbReference type="Pfam" id="PF03652">
    <property type="entry name" value="RuvX"/>
    <property type="match status" value="1"/>
</dbReference>
<dbReference type="SMART" id="SM00732">
    <property type="entry name" value="YqgFc"/>
    <property type="match status" value="1"/>
</dbReference>
<dbReference type="SUPFAM" id="SSF53098">
    <property type="entry name" value="Ribonuclease H-like"/>
    <property type="match status" value="1"/>
</dbReference>
<feature type="chain" id="PRO_1000131075" description="Putative pre-16S rRNA nuclease">
    <location>
        <begin position="1"/>
        <end position="139"/>
    </location>
</feature>
<proteinExistence type="inferred from homology"/>
<comment type="function">
    <text evidence="1">Could be a nuclease involved in processing of the 5'-end of pre-16S rRNA.</text>
</comment>
<comment type="subcellular location">
    <subcellularLocation>
        <location evidence="1">Cytoplasm</location>
    </subcellularLocation>
</comment>
<comment type="similarity">
    <text evidence="1">Belongs to the YqgF nuclease family.</text>
</comment>
<name>YQGF_STRP4</name>